<accession>Q9H4W6</accession>
<accession>A0AUY1</accession>
<accession>Q5T6H9</accession>
<accession>Q9H4W5</accession>
<sequence>MFGIQENIPRGGTTMKEEPLGSGMNPVRSWMHTAGVVDANTAAQSGVGLARAHFEKQPPSNLRKSNFFHFVLALYDRQGQPVEIERTAFVDFVEKEKEPNNEKTNNGIHYKLQLLYSNGVRTEQDLYVRLIDSMTKQAIVYEGQDKNPEMCRVLLTHEIMCSRCCDKKSCGNRNETPSDPVIIDRFFLKFFLKCNQNCLKNAGNPRDMRRFQVVVSTTVNVDGHVLAVSDNMFVHNNSKHGRRARRLDPSEGTAPSYLENATPCIKAISPSEGWTTGGATVIIIGDNFFDGLQVVFGTMLVWSELITPHAIRVQTPPRHIPGVVEVTLSYKSKQFCKGAPGRFVYTALNEPTIDYGFQRLQKVIPRHPGDPERLPKEVLLKRAADLVEALYGMPHNNQEIILKRAADIAEALYSVPRNHNQIPTLGNNPAHTGMMGVNSFSSQLAVNVSETSQANDQVGYSRNTSSVSPRGYVPSSTPQQSNYNTVSTSMNGYGSGAMASLGVPGSPGFLNGSSANSPYGIVPSSPTMAASSVTLPSNCSSTHGIFSFSPANVISAVKQKSAFAPVVRPQASPPPSCTSANGNGLQAMSGLVVPPM</sequence>
<keyword id="KW-0002">3D-structure</keyword>
<keyword id="KW-0010">Activator</keyword>
<keyword id="KW-0025">Alternative splicing</keyword>
<keyword id="KW-0217">Developmental protein</keyword>
<keyword id="KW-0225">Disease variant</keyword>
<keyword id="KW-0238">DNA-binding</keyword>
<keyword id="KW-0991">Intellectual disability</keyword>
<keyword id="KW-0479">Metal-binding</keyword>
<keyword id="KW-0539">Nucleus</keyword>
<keyword id="KW-1267">Proteomics identification</keyword>
<keyword id="KW-1185">Reference proteome</keyword>
<keyword id="KW-0804">Transcription</keyword>
<keyword id="KW-0805">Transcription regulation</keyword>
<keyword id="KW-0862">Zinc</keyword>
<keyword id="KW-0863">Zinc-finger</keyword>
<organism>
    <name type="scientific">Homo sapiens</name>
    <name type="common">Human</name>
    <dbReference type="NCBI Taxonomy" id="9606"/>
    <lineage>
        <taxon>Eukaryota</taxon>
        <taxon>Metazoa</taxon>
        <taxon>Chordata</taxon>
        <taxon>Craniata</taxon>
        <taxon>Vertebrata</taxon>
        <taxon>Euteleostomi</taxon>
        <taxon>Mammalia</taxon>
        <taxon>Eutheria</taxon>
        <taxon>Euarchontoglires</taxon>
        <taxon>Primates</taxon>
        <taxon>Haplorrhini</taxon>
        <taxon>Catarrhini</taxon>
        <taxon>Hominidae</taxon>
        <taxon>Homo</taxon>
    </lineage>
</organism>
<protein>
    <recommendedName>
        <fullName>Transcription factor COE3</fullName>
    </recommendedName>
    <alternativeName>
        <fullName>Early B-cell factor 3</fullName>
        <shortName>EBF-3</shortName>
    </alternativeName>
    <alternativeName>
        <fullName>Olf-1/EBF-like 2</fullName>
        <shortName>O/E-2</shortName>
        <shortName>OE-2</shortName>
    </alternativeName>
</protein>
<dbReference type="EMBL" id="AL354950">
    <property type="status" value="NOT_ANNOTATED_CDS"/>
    <property type="molecule type" value="Genomic_DNA"/>
</dbReference>
<dbReference type="EMBL" id="CH471066">
    <property type="protein sequence ID" value="EAW49160.1"/>
    <property type="molecule type" value="Genomic_DNA"/>
</dbReference>
<dbReference type="EMBL" id="BC126130">
    <property type="protein sequence ID" value="AAI26131.1"/>
    <property type="molecule type" value="mRNA"/>
</dbReference>
<dbReference type="EMBL" id="BC130479">
    <property type="protein sequence ID" value="AAI30480.1"/>
    <property type="molecule type" value="mRNA"/>
</dbReference>
<dbReference type="CCDS" id="CCDS31314.1">
    <molecule id="Q9H4W6-2"/>
</dbReference>
<dbReference type="CCDS" id="CCDS91376.1">
    <molecule id="Q9H4W6-1"/>
</dbReference>
<dbReference type="RefSeq" id="NP_001005463.1">
    <molecule id="Q9H4W6-2"/>
    <property type="nucleotide sequence ID" value="NM_001005463.3"/>
</dbReference>
<dbReference type="RefSeq" id="NP_001362308.1">
    <molecule id="Q9H4W6-1"/>
    <property type="nucleotide sequence ID" value="NM_001375379.1"/>
</dbReference>
<dbReference type="RefSeq" id="XP_005252725.1">
    <property type="nucleotide sequence ID" value="XM_005252668.3"/>
</dbReference>
<dbReference type="PDB" id="3MUJ">
    <property type="method" value="X-ray"/>
    <property type="resolution" value="1.92 A"/>
    <property type="chains" value="A/B=261-395"/>
</dbReference>
<dbReference type="PDB" id="3N50">
    <property type="method" value="X-ray"/>
    <property type="resolution" value="3.10 A"/>
    <property type="chains" value="A/B/C/D/E/F=261-415"/>
</dbReference>
<dbReference type="PDBsum" id="3MUJ"/>
<dbReference type="PDBsum" id="3N50"/>
<dbReference type="SMR" id="Q9H4W6"/>
<dbReference type="BioGRID" id="128985">
    <property type="interactions" value="21"/>
</dbReference>
<dbReference type="FunCoup" id="Q9H4W6">
    <property type="interactions" value="1348"/>
</dbReference>
<dbReference type="IntAct" id="Q9H4W6">
    <property type="interactions" value="11"/>
</dbReference>
<dbReference type="MINT" id="Q9H4W6"/>
<dbReference type="STRING" id="9606.ENSP00000357637"/>
<dbReference type="iPTMnet" id="Q9H4W6"/>
<dbReference type="PhosphoSitePlus" id="Q9H4W6"/>
<dbReference type="BioMuta" id="EBF3"/>
<dbReference type="DMDM" id="13959320"/>
<dbReference type="jPOST" id="Q9H4W6"/>
<dbReference type="MassIVE" id="Q9H4W6"/>
<dbReference type="PaxDb" id="9606-ENSP00000357637"/>
<dbReference type="PeptideAtlas" id="Q9H4W6"/>
<dbReference type="ProteomicsDB" id="80876">
    <molecule id="Q9H4W6-1"/>
</dbReference>
<dbReference type="ProteomicsDB" id="80877">
    <molecule id="Q9H4W6-2"/>
</dbReference>
<dbReference type="Pumba" id="Q9H4W6"/>
<dbReference type="Antibodypedia" id="32510">
    <property type="antibodies" value="179 antibodies from 30 providers"/>
</dbReference>
<dbReference type="DNASU" id="253738"/>
<dbReference type="Ensembl" id="ENST00000355311.10">
    <molecule id="Q9H4W6-1"/>
    <property type="protein sequence ID" value="ENSP00000347463.4"/>
    <property type="gene ID" value="ENSG00000108001.16"/>
</dbReference>
<dbReference type="Ensembl" id="ENST00000368648.8">
    <molecule id="Q9H4W6-2"/>
    <property type="protein sequence ID" value="ENSP00000357637.3"/>
    <property type="gene ID" value="ENSG00000108001.16"/>
</dbReference>
<dbReference type="GeneID" id="253738"/>
<dbReference type="KEGG" id="hsa:253738"/>
<dbReference type="UCSC" id="uc001lki.3">
    <molecule id="Q9H4W6-1"/>
    <property type="organism name" value="human"/>
</dbReference>
<dbReference type="AGR" id="HGNC:19087"/>
<dbReference type="CTD" id="253738"/>
<dbReference type="DisGeNET" id="253738"/>
<dbReference type="GeneCards" id="EBF3"/>
<dbReference type="GeneReviews" id="EBF3"/>
<dbReference type="HGNC" id="HGNC:19087">
    <property type="gene designation" value="EBF3"/>
</dbReference>
<dbReference type="HPA" id="ENSG00000108001">
    <property type="expression patterns" value="Tissue enhanced (adipose)"/>
</dbReference>
<dbReference type="MalaCards" id="EBF3"/>
<dbReference type="MIM" id="607407">
    <property type="type" value="gene"/>
</dbReference>
<dbReference type="MIM" id="617330">
    <property type="type" value="phenotype"/>
</dbReference>
<dbReference type="neXtProt" id="NX_Q9H4W6"/>
<dbReference type="OpenTargets" id="ENSG00000108001"/>
<dbReference type="Orphanet" id="96148">
    <property type="disease" value="Distal deletion 10q syndrome"/>
</dbReference>
<dbReference type="Orphanet" id="528084">
    <property type="disease" value="Non-specific syndromic intellectual disability"/>
</dbReference>
<dbReference type="PharmGKB" id="PA134972607"/>
<dbReference type="VEuPathDB" id="HostDB:ENSG00000108001"/>
<dbReference type="eggNOG" id="KOG3836">
    <property type="taxonomic scope" value="Eukaryota"/>
</dbReference>
<dbReference type="GeneTree" id="ENSGT00950000182859"/>
<dbReference type="HOGENOM" id="CLU_016320_3_1_1"/>
<dbReference type="InParanoid" id="Q9H4W6"/>
<dbReference type="OrthoDB" id="25246at2759"/>
<dbReference type="PAN-GO" id="Q9H4W6">
    <property type="GO annotations" value="3 GO annotations based on evolutionary models"/>
</dbReference>
<dbReference type="PhylomeDB" id="Q9H4W6"/>
<dbReference type="TreeFam" id="TF313391"/>
<dbReference type="PathwayCommons" id="Q9H4W6"/>
<dbReference type="SignaLink" id="Q9H4W6"/>
<dbReference type="SIGNOR" id="Q9H4W6"/>
<dbReference type="BioGRID-ORCS" id="253738">
    <property type="hits" value="15 hits in 1172 CRISPR screens"/>
</dbReference>
<dbReference type="ChiTaRS" id="EBF3">
    <property type="organism name" value="human"/>
</dbReference>
<dbReference type="EvolutionaryTrace" id="Q9H4W6"/>
<dbReference type="GenomeRNAi" id="253738"/>
<dbReference type="Pharos" id="Q9H4W6">
    <property type="development level" value="Tbio"/>
</dbReference>
<dbReference type="PRO" id="PR:Q9H4W6"/>
<dbReference type="Proteomes" id="UP000005640">
    <property type="component" value="Chromosome 10"/>
</dbReference>
<dbReference type="RNAct" id="Q9H4W6">
    <property type="molecule type" value="protein"/>
</dbReference>
<dbReference type="Bgee" id="ENSG00000108001">
    <property type="expression patterns" value="Expressed in tibialis anterior and 136 other cell types or tissues"/>
</dbReference>
<dbReference type="ExpressionAtlas" id="Q9H4W6">
    <property type="expression patterns" value="baseline and differential"/>
</dbReference>
<dbReference type="GO" id="GO:0000785">
    <property type="term" value="C:chromatin"/>
    <property type="evidence" value="ECO:0000247"/>
    <property type="project" value="NTNU_SB"/>
</dbReference>
<dbReference type="GO" id="GO:0005634">
    <property type="term" value="C:nucleus"/>
    <property type="evidence" value="ECO:0000314"/>
    <property type="project" value="UniProtKB"/>
</dbReference>
<dbReference type="GO" id="GO:0000981">
    <property type="term" value="F:DNA-binding transcription factor activity, RNA polymerase II-specific"/>
    <property type="evidence" value="ECO:0000247"/>
    <property type="project" value="NTNU_SB"/>
</dbReference>
<dbReference type="GO" id="GO:0000978">
    <property type="term" value="F:RNA polymerase II cis-regulatory region sequence-specific DNA binding"/>
    <property type="evidence" value="ECO:0000318"/>
    <property type="project" value="GO_Central"/>
</dbReference>
<dbReference type="GO" id="GO:0008270">
    <property type="term" value="F:zinc ion binding"/>
    <property type="evidence" value="ECO:0007669"/>
    <property type="project" value="UniProtKB-KW"/>
</dbReference>
<dbReference type="GO" id="GO:0045893">
    <property type="term" value="P:positive regulation of DNA-templated transcription"/>
    <property type="evidence" value="ECO:0000315"/>
    <property type="project" value="UniProtKB"/>
</dbReference>
<dbReference type="GO" id="GO:0006357">
    <property type="term" value="P:regulation of transcription by RNA polymerase II"/>
    <property type="evidence" value="ECO:0000318"/>
    <property type="project" value="GO_Central"/>
</dbReference>
<dbReference type="CDD" id="cd11606">
    <property type="entry name" value="COE_DBD"/>
    <property type="match status" value="1"/>
</dbReference>
<dbReference type="CDD" id="cd01175">
    <property type="entry name" value="IPT_COE"/>
    <property type="match status" value="1"/>
</dbReference>
<dbReference type="FunFam" id="1.10.287.4280:FF:000001">
    <property type="entry name" value="transcription factor COE1 isoform X2"/>
    <property type="match status" value="1"/>
</dbReference>
<dbReference type="FunFam" id="2.60.40.3180:FF:000001">
    <property type="entry name" value="transcription factor COE1 isoform X2"/>
    <property type="match status" value="1"/>
</dbReference>
<dbReference type="FunFam" id="2.60.40.10:FF:001696">
    <property type="entry name" value="Transcription factor COE3"/>
    <property type="match status" value="1"/>
</dbReference>
<dbReference type="Gene3D" id="1.10.287.4280">
    <property type="match status" value="1"/>
</dbReference>
<dbReference type="Gene3D" id="2.60.40.10">
    <property type="entry name" value="Immunoglobulins"/>
    <property type="match status" value="1"/>
</dbReference>
<dbReference type="Gene3D" id="2.60.40.3180">
    <property type="entry name" value="Transcription factor COE1, DNA-binding domain"/>
    <property type="match status" value="1"/>
</dbReference>
<dbReference type="InterPro" id="IPR032200">
    <property type="entry name" value="COE_DBD"/>
</dbReference>
<dbReference type="InterPro" id="IPR038173">
    <property type="entry name" value="COE_DBD_sf"/>
</dbReference>
<dbReference type="InterPro" id="IPR032201">
    <property type="entry name" value="COE_HLH"/>
</dbReference>
<dbReference type="InterPro" id="IPR038006">
    <property type="entry name" value="COE_IPT"/>
</dbReference>
<dbReference type="InterPro" id="IPR013783">
    <property type="entry name" value="Ig-like_fold"/>
</dbReference>
<dbReference type="InterPro" id="IPR014756">
    <property type="entry name" value="Ig_E-set"/>
</dbReference>
<dbReference type="InterPro" id="IPR002909">
    <property type="entry name" value="IPT_dom"/>
</dbReference>
<dbReference type="InterPro" id="IPR003523">
    <property type="entry name" value="Transcription_factor_COE"/>
</dbReference>
<dbReference type="InterPro" id="IPR018350">
    <property type="entry name" value="Transcription_factor_COE_CS"/>
</dbReference>
<dbReference type="PANTHER" id="PTHR10747">
    <property type="entry name" value="TRANSCRIPTION FACTOR COE FAMILY MEMBER"/>
    <property type="match status" value="1"/>
</dbReference>
<dbReference type="Pfam" id="PF16422">
    <property type="entry name" value="COE1_DBD"/>
    <property type="match status" value="1"/>
</dbReference>
<dbReference type="Pfam" id="PF16423">
    <property type="entry name" value="COE1_HLH"/>
    <property type="match status" value="1"/>
</dbReference>
<dbReference type="Pfam" id="PF01833">
    <property type="entry name" value="TIG"/>
    <property type="match status" value="1"/>
</dbReference>
<dbReference type="SMART" id="SM00429">
    <property type="entry name" value="IPT"/>
    <property type="match status" value="1"/>
</dbReference>
<dbReference type="SUPFAM" id="SSF81296">
    <property type="entry name" value="E set domains"/>
    <property type="match status" value="1"/>
</dbReference>
<dbReference type="PROSITE" id="PS01345">
    <property type="entry name" value="COE"/>
    <property type="match status" value="1"/>
</dbReference>
<feature type="chain" id="PRO_0000107832" description="Transcription factor COE3">
    <location>
        <begin position="1"/>
        <end position="596"/>
    </location>
</feature>
<feature type="domain" description="IPT/TIG">
    <location>
        <begin position="263"/>
        <end position="346"/>
    </location>
</feature>
<feature type="zinc finger region" description="C5-type" evidence="4">
    <location>
        <begin position="151"/>
        <end position="170"/>
    </location>
</feature>
<feature type="region of interest" description="Disordered" evidence="5">
    <location>
        <begin position="1"/>
        <end position="22"/>
    </location>
</feature>
<feature type="region of interest" description="Interaction with DNA" evidence="1">
    <location>
        <begin position="63"/>
        <end position="66"/>
    </location>
</feature>
<feature type="region of interest" description="Interaction with DNA" evidence="1">
    <location>
        <begin position="197"/>
        <end position="204"/>
    </location>
</feature>
<feature type="region of interest" description="Interaction with DNA" evidence="1">
    <location>
        <begin position="236"/>
        <end position="239"/>
    </location>
</feature>
<feature type="region of interest" description="Disordered" evidence="5">
    <location>
        <begin position="451"/>
        <end position="483"/>
    </location>
</feature>
<feature type="site" description="Interaction with DNA" evidence="1">
    <location>
        <position position="163"/>
    </location>
</feature>
<feature type="site" description="Interaction with DNA" evidence="1">
    <location>
        <position position="172"/>
    </location>
</feature>
<feature type="splice variant" id="VSP_001113" description="In isoform Short." evidence="10">
    <location>
        <begin position="252"/>
        <end position="260"/>
    </location>
</feature>
<feature type="splice variant" id="VSP_001114" description="In isoform Short." evidence="10">
    <original>IVPSSPTMAASSVTLPSNCSSTHGIFSFSPANVISAVK</original>
    <variation>MK</variation>
    <location>
        <begin position="521"/>
        <end position="558"/>
    </location>
</feature>
<feature type="sequence variant" id="VAR_078033" description="In HADDS; significant loss of transcriptional activator activity; localizes both in the cytoplasm and the nucleus; decreased chromatin binding; dbSNP:rs1057519518." evidence="9">
    <original>N</original>
    <variation>D</variation>
    <location>
        <position position="66"/>
    </location>
</feature>
<feature type="sequence variant" id="VAR_078034" description="In HADDS; significant loss of transcriptional activator activity; localizes both in the cytoplasm and the nucleus; decreased chromatin-binding; dbSNP:rs1057519519." evidence="9">
    <original>Y</original>
    <variation>C</variation>
    <location>
        <position position="141"/>
    </location>
</feature>
<feature type="sequence variant" id="VAR_078035" description="In HADDS; significant loss of transcriptional activator activity; localizes both in the cytoplasm and the nucleus; decreased chromatin-binding." evidence="9">
    <original>I</original>
    <variation>IHEI</variation>
    <location>
        <position position="159"/>
    </location>
</feature>
<feature type="sequence variant" id="VAR_078036" description="In HADDS; partial loss of transcriptional activator activity; dbSNP:rs1057519389." evidence="8">
    <original>R</original>
    <variation>L</variation>
    <location>
        <position position="163"/>
    </location>
</feature>
<feature type="sequence variant" id="VAR_078037" description="In HADDS; loss of transcriptional activator activity; dbSNP:rs1057519389." evidence="7">
    <original>R</original>
    <variation>P</variation>
    <location>
        <position position="163"/>
    </location>
</feature>
<feature type="sequence variant" id="VAR_078038" description="In HADDS; loss of transcriptional activator activity; dbSNP:rs1057519389." evidence="8">
    <original>R</original>
    <variation>Q</variation>
    <location>
        <position position="163"/>
    </location>
</feature>
<feature type="sequence variant" id="VAR_078039" description="In HADDS; significant loss of transcriptional activator activity; localizes both in the cytoplasm and the nucleus; decreased chromatin-binding; dbSNP:rs1057519437." evidence="9">
    <original>G</original>
    <variation>D</variation>
    <location>
        <position position="171"/>
    </location>
</feature>
<feature type="sequence variant" id="VAR_078040" description="In HADDS; according to PubMed:28017373 shows significant loss of transcriptional activator activity while according to PubMed:28017370 shows partial loss of transcriptional activator activity; localizes both in the cytoplasm and the nucleus; decreased chromatin-binding; dbSNP:rs869312668." evidence="7 9">
    <original>P</original>
    <variation>L</variation>
    <location>
        <position position="177"/>
    </location>
</feature>
<feature type="sequence variant" id="VAR_078041" description="In HADDS; significant loss of transcriptional activator activity; dbSNP:rs1057519520." evidence="7">
    <original>K</original>
    <variation>N</variation>
    <location>
        <position position="193"/>
    </location>
</feature>
<feature type="sequence variant" id="VAR_078042" description="In HADDS; significant loss of transcriptional activator activity; localizes both in the cytoplasm and the nucleus; decreased chromatin-binding; dbSNP:rs779003155." evidence="9">
    <original>R</original>
    <variation>W</variation>
    <location>
        <position position="209"/>
    </location>
</feature>
<feature type="strand" evidence="12">
    <location>
        <begin position="264"/>
        <end position="274"/>
    </location>
</feature>
<feature type="strand" evidence="12">
    <location>
        <begin position="280"/>
        <end position="287"/>
    </location>
</feature>
<feature type="strand" evidence="12">
    <location>
        <begin position="293"/>
        <end position="296"/>
    </location>
</feature>
<feature type="strand" evidence="12">
    <location>
        <begin position="299"/>
        <end position="301"/>
    </location>
</feature>
<feature type="strand" evidence="12">
    <location>
        <begin position="303"/>
        <end position="307"/>
    </location>
</feature>
<feature type="strand" evidence="12">
    <location>
        <begin position="310"/>
        <end position="314"/>
    </location>
</feature>
<feature type="strand" evidence="12">
    <location>
        <begin position="322"/>
        <end position="330"/>
    </location>
</feature>
<feature type="strand" evidence="12">
    <location>
        <begin position="333"/>
        <end position="335"/>
    </location>
</feature>
<feature type="strand" evidence="13">
    <location>
        <begin position="337"/>
        <end position="339"/>
    </location>
</feature>
<feature type="strand" evidence="12">
    <location>
        <begin position="341"/>
        <end position="346"/>
    </location>
</feature>
<feature type="helix" evidence="12">
    <location>
        <begin position="353"/>
        <end position="363"/>
    </location>
</feature>
<feature type="helix" evidence="12">
    <location>
        <begin position="376"/>
        <end position="391"/>
    </location>
</feature>
<feature type="helix" evidence="13">
    <location>
        <begin position="396"/>
        <end position="412"/>
    </location>
</feature>
<evidence type="ECO:0000250" key="1"/>
<evidence type="ECO:0000250" key="2">
    <source>
        <dbReference type="UniProtKB" id="O08791"/>
    </source>
</evidence>
<evidence type="ECO:0000250" key="3">
    <source>
        <dbReference type="UniProtKB" id="Q07802"/>
    </source>
</evidence>
<evidence type="ECO:0000255" key="4"/>
<evidence type="ECO:0000256" key="5">
    <source>
        <dbReference type="SAM" id="MobiDB-lite"/>
    </source>
</evidence>
<evidence type="ECO:0000269" key="6">
    <source>
    </source>
</evidence>
<evidence type="ECO:0000269" key="7">
    <source>
    </source>
</evidence>
<evidence type="ECO:0000269" key="8">
    <source>
    </source>
</evidence>
<evidence type="ECO:0000269" key="9">
    <source>
    </source>
</evidence>
<evidence type="ECO:0000303" key="10">
    <source>
    </source>
</evidence>
<evidence type="ECO:0000305" key="11"/>
<evidence type="ECO:0007829" key="12">
    <source>
        <dbReference type="PDB" id="3MUJ"/>
    </source>
</evidence>
<evidence type="ECO:0007829" key="13">
    <source>
        <dbReference type="PDB" id="3N50"/>
    </source>
</evidence>
<comment type="function">
    <text evidence="3 7 8 9">Transcriptional activator (PubMed:28017370, PubMed:28017372, PubMed:28017373). Recognizes variations of the palindromic sequence 5'-ATTCCCNNGGGAATT-3' (By similarity).</text>
</comment>
<comment type="subunit">
    <text evidence="2">Forms either a homodimer or a heterodimer with a related family member.</text>
</comment>
<comment type="interaction">
    <interactant intactId="EBI-17233744">
        <id>Q9H4W6-2</id>
    </interactant>
    <interactant intactId="EBI-1166928">
        <id>Q8N5M1</id>
        <label>ATPAF2</label>
    </interactant>
    <organismsDiffer>false</organismsDiffer>
    <experiments>3</experiments>
</comment>
<comment type="interaction">
    <interactant intactId="EBI-17233744">
        <id>Q9H4W6-2</id>
    </interactant>
    <interactant intactId="EBI-12267154">
        <id>Q9HAK2</id>
        <label>EBF2</label>
    </interactant>
    <organismsDiffer>false</organismsDiffer>
    <experiments>3</experiments>
</comment>
<comment type="subcellular location">
    <subcellularLocation>
        <location evidence="9">Nucleus</location>
    </subcellularLocation>
</comment>
<comment type="alternative products">
    <event type="alternative splicing"/>
    <isoform>
        <id>Q9H4W6-1</id>
        <name>Long</name>
        <sequence type="displayed"/>
    </isoform>
    <isoform>
        <id>Q9H4W6-2</id>
        <name>Short</name>
        <sequence type="described" ref="VSP_001113 VSP_001114"/>
    </isoform>
</comment>
<comment type="tissue specificity">
    <text evidence="6">Expressed in brain.</text>
</comment>
<comment type="disease" evidence="7 8 9">
    <disease id="DI-04945">
        <name>Hypotonia, ataxia, and delayed development syndrome</name>
        <acronym>HADDS</acronym>
        <description>An autosomal dominant neurodevelopmental syndrome characterized by global developmental delay, moderate to severe intellectual disability, cerebellar ataxia, hypotonia, speech delay, variable dysmorphic features, and genitourinary abnormalities including vesicoureteric reflux.</description>
        <dbReference type="MIM" id="617330"/>
    </disease>
    <text>The disease is caused by variants affecting the gene represented in this entry.</text>
</comment>
<comment type="similarity">
    <text evidence="11">Belongs to the COE family.</text>
</comment>
<proteinExistence type="evidence at protein level"/>
<name>COE3_HUMAN</name>
<reference key="1">
    <citation type="journal article" date="2004" name="Nature">
        <title>The DNA sequence and comparative analysis of human chromosome 10.</title>
        <authorList>
            <person name="Deloukas P."/>
            <person name="Earthrowl M.E."/>
            <person name="Grafham D.V."/>
            <person name="Rubenfield M."/>
            <person name="French L."/>
            <person name="Steward C.A."/>
            <person name="Sims S.K."/>
            <person name="Jones M.C."/>
            <person name="Searle S."/>
            <person name="Scott C."/>
            <person name="Howe K."/>
            <person name="Hunt S.E."/>
            <person name="Andrews T.D."/>
            <person name="Gilbert J.G.R."/>
            <person name="Swarbreck D."/>
            <person name="Ashurst J.L."/>
            <person name="Taylor A."/>
            <person name="Battles J."/>
            <person name="Bird C.P."/>
            <person name="Ainscough R."/>
            <person name="Almeida J.P."/>
            <person name="Ashwell R.I.S."/>
            <person name="Ambrose K.D."/>
            <person name="Babbage A.K."/>
            <person name="Bagguley C.L."/>
            <person name="Bailey J."/>
            <person name="Banerjee R."/>
            <person name="Bates K."/>
            <person name="Beasley H."/>
            <person name="Bray-Allen S."/>
            <person name="Brown A.J."/>
            <person name="Brown J.Y."/>
            <person name="Burford D.C."/>
            <person name="Burrill W."/>
            <person name="Burton J."/>
            <person name="Cahill P."/>
            <person name="Camire D."/>
            <person name="Carter N.P."/>
            <person name="Chapman J.C."/>
            <person name="Clark S.Y."/>
            <person name="Clarke G."/>
            <person name="Clee C.M."/>
            <person name="Clegg S."/>
            <person name="Corby N."/>
            <person name="Coulson A."/>
            <person name="Dhami P."/>
            <person name="Dutta I."/>
            <person name="Dunn M."/>
            <person name="Faulkner L."/>
            <person name="Frankish A."/>
            <person name="Frankland J.A."/>
            <person name="Garner P."/>
            <person name="Garnett J."/>
            <person name="Gribble S."/>
            <person name="Griffiths C."/>
            <person name="Grocock R."/>
            <person name="Gustafson E."/>
            <person name="Hammond S."/>
            <person name="Harley J.L."/>
            <person name="Hart E."/>
            <person name="Heath P.D."/>
            <person name="Ho T.P."/>
            <person name="Hopkins B."/>
            <person name="Horne J."/>
            <person name="Howden P.J."/>
            <person name="Huckle E."/>
            <person name="Hynds C."/>
            <person name="Johnson C."/>
            <person name="Johnson D."/>
            <person name="Kana A."/>
            <person name="Kay M."/>
            <person name="Kimberley A.M."/>
            <person name="Kershaw J.K."/>
            <person name="Kokkinaki M."/>
            <person name="Laird G.K."/>
            <person name="Lawlor S."/>
            <person name="Lee H.M."/>
            <person name="Leongamornlert D.A."/>
            <person name="Laird G."/>
            <person name="Lloyd C."/>
            <person name="Lloyd D.M."/>
            <person name="Loveland J."/>
            <person name="Lovell J."/>
            <person name="McLaren S."/>
            <person name="McLay K.E."/>
            <person name="McMurray A."/>
            <person name="Mashreghi-Mohammadi M."/>
            <person name="Matthews L."/>
            <person name="Milne S."/>
            <person name="Nickerson T."/>
            <person name="Nguyen M."/>
            <person name="Overton-Larty E."/>
            <person name="Palmer S.A."/>
            <person name="Pearce A.V."/>
            <person name="Peck A.I."/>
            <person name="Pelan S."/>
            <person name="Phillimore B."/>
            <person name="Porter K."/>
            <person name="Rice C.M."/>
            <person name="Rogosin A."/>
            <person name="Ross M.T."/>
            <person name="Sarafidou T."/>
            <person name="Sehra H.K."/>
            <person name="Shownkeen R."/>
            <person name="Skuce C.D."/>
            <person name="Smith M."/>
            <person name="Standring L."/>
            <person name="Sycamore N."/>
            <person name="Tester J."/>
            <person name="Thorpe A."/>
            <person name="Torcasso W."/>
            <person name="Tracey A."/>
            <person name="Tromans A."/>
            <person name="Tsolas J."/>
            <person name="Wall M."/>
            <person name="Walsh J."/>
            <person name="Wang H."/>
            <person name="Weinstock K."/>
            <person name="West A.P."/>
            <person name="Willey D.L."/>
            <person name="Whitehead S.L."/>
            <person name="Wilming L."/>
            <person name="Wray P.W."/>
            <person name="Young L."/>
            <person name="Chen Y."/>
            <person name="Lovering R.C."/>
            <person name="Moschonas N.K."/>
            <person name="Siebert R."/>
            <person name="Fechtel K."/>
            <person name="Bentley D."/>
            <person name="Durbin R.M."/>
            <person name="Hubbard T."/>
            <person name="Doucette-Stamm L."/>
            <person name="Beck S."/>
            <person name="Smith D.R."/>
            <person name="Rogers J."/>
        </authorList>
    </citation>
    <scope>NUCLEOTIDE SEQUENCE [LARGE SCALE GENOMIC DNA] (ISOFORMS LONG AND SHORT)</scope>
</reference>
<reference key="2">
    <citation type="submission" date="2005-09" db="EMBL/GenBank/DDBJ databases">
        <authorList>
            <person name="Mural R.J."/>
            <person name="Istrail S."/>
            <person name="Sutton G.G."/>
            <person name="Florea L."/>
            <person name="Halpern A.L."/>
            <person name="Mobarry C.M."/>
            <person name="Lippert R."/>
            <person name="Walenz B."/>
            <person name="Shatkay H."/>
            <person name="Dew I."/>
            <person name="Miller J.R."/>
            <person name="Flanigan M.J."/>
            <person name="Edwards N.J."/>
            <person name="Bolanos R."/>
            <person name="Fasulo D."/>
            <person name="Halldorsson B.V."/>
            <person name="Hannenhalli S."/>
            <person name="Turner R."/>
            <person name="Yooseph S."/>
            <person name="Lu F."/>
            <person name="Nusskern D.R."/>
            <person name="Shue B.C."/>
            <person name="Zheng X.H."/>
            <person name="Zhong F."/>
            <person name="Delcher A.L."/>
            <person name="Huson D.H."/>
            <person name="Kravitz S.A."/>
            <person name="Mouchard L."/>
            <person name="Reinert K."/>
            <person name="Remington K.A."/>
            <person name="Clark A.G."/>
            <person name="Waterman M.S."/>
            <person name="Eichler E.E."/>
            <person name="Adams M.D."/>
            <person name="Hunkapiller M.W."/>
            <person name="Myers E.W."/>
            <person name="Venter J.C."/>
        </authorList>
    </citation>
    <scope>NUCLEOTIDE SEQUENCE [LARGE SCALE GENOMIC DNA]</scope>
</reference>
<reference key="3">
    <citation type="journal article" date="2004" name="Genome Res.">
        <title>The status, quality, and expansion of the NIH full-length cDNA project: the Mammalian Gene Collection (MGC).</title>
        <authorList>
            <consortium name="The MGC Project Team"/>
        </authorList>
    </citation>
    <scope>NUCLEOTIDE SEQUENCE [LARGE SCALE MRNA] (ISOFORM SHORT)</scope>
</reference>
<reference key="4">
    <citation type="journal article" date="2002" name="Nat. Genet.">
        <title>Integrated genomic and epigenomic analyses pinpoint biallelic gene inactivation in tumors.</title>
        <authorList>
            <person name="Zardo G."/>
            <person name="Tiirikainen M.I."/>
            <person name="Hong C."/>
            <person name="Misra A."/>
            <person name="Feuerstein B.G."/>
            <person name="Volik S."/>
            <person name="Collins C.C."/>
            <person name="Lamborn K.R."/>
            <person name="Bollen A."/>
            <person name="Pinkel D."/>
            <person name="Albertson D.G."/>
            <person name="Costello J.F."/>
        </authorList>
    </citation>
    <scope>TISSUE SPECIFICITY</scope>
</reference>
<reference key="5">
    <citation type="journal article" date="2010" name="J. Biol. Chem.">
        <title>Structural determination of functional domains in early B-cell factor (EBF) family of transcription factors reveals similarities to Rel DNA-binding proteins and a novel dimerization motif.</title>
        <authorList>
            <person name="Siponen M.I."/>
            <person name="Wisniewska M."/>
            <person name="Lehtio L."/>
            <person name="Johansson I."/>
            <person name="Svensson L."/>
            <person name="Raszewski G."/>
            <person name="Nilsson L."/>
            <person name="Sigvardsson M."/>
            <person name="Berglund H."/>
        </authorList>
    </citation>
    <scope>X-RAY CRYSTALLOGRAPHY (1.92 ANGSTROMS) OF 261-415</scope>
</reference>
<reference key="6">
    <citation type="journal article" date="2017" name="Am. J. Hum. Genet.">
        <title>Mutations in EBF3 disturb transcriptional profiles and cause intellectual disability, ataxia, and facial dysmorphism.</title>
        <authorList>
            <person name="Harms F.L."/>
            <person name="Girisha K.M."/>
            <person name="Hardigan A.A."/>
            <person name="Kortuem F."/>
            <person name="Shukla A."/>
            <person name="Alawi M."/>
            <person name="Dalal A."/>
            <person name="Brady L."/>
            <person name="Tarnopolsky M."/>
            <person name="Bird L.M."/>
            <person name="Ceulemans S."/>
            <person name="Bebin M."/>
            <person name="Bowling K.M."/>
            <person name="Hiatt S.M."/>
            <person name="Lose E.J."/>
            <person name="Primiano M."/>
            <person name="Chung W.K."/>
            <person name="Juusola J."/>
            <person name="Akdemir Z.C."/>
            <person name="Bainbridge M."/>
            <person name="Charng W.L."/>
            <person name="Drummond-Borg M."/>
            <person name="Eldomery M.K."/>
            <person name="El-Hattab A.W."/>
            <person name="Saleh M.A."/>
            <person name="Bezieau S."/>
            <person name="Cogne B."/>
            <person name="Isidor B."/>
            <person name="Kuery S."/>
            <person name="Lupski J.R."/>
            <person name="Myers R.M."/>
            <person name="Cooper G.M."/>
            <person name="Kutsche K."/>
        </authorList>
    </citation>
    <scope>VARIANTS HADDS ASP-66; CYS-141; HIS-GLU-ILE-159 INS; ASP-171; LEU-177 AND TRP-209</scope>
    <scope>CHARACTERIZATION OF VARIANTS HADDS ASP-66; CYS-141; HIS-GLU-ILE-159 INS; ASP-171; LEU-177 AND TRP-209</scope>
    <scope>INVOLVEMENT IN HADDS</scope>
    <scope>FUNCTION</scope>
    <scope>SUBCELLULAR LOCATION</scope>
</reference>
<reference key="7">
    <citation type="journal article" date="2017" name="Am. J. Hum. Genet.">
        <title>A syndromic neurodevelopmental disorder caused by de novo variants in EBF3.</title>
        <authorList>
            <person name="Chao H.T."/>
            <person name="Davids M."/>
            <person name="Burke E."/>
            <person name="Pappas J.G."/>
            <person name="Rosenfeld J.A."/>
            <person name="McCarty A.J."/>
            <person name="Davis T."/>
            <person name="Wolfe L."/>
            <person name="Toro C."/>
            <person name="Tifft C."/>
            <person name="Xia F."/>
            <person name="Stong N."/>
            <person name="Johnson T.K."/>
            <person name="Warr C.G."/>
            <person name="Yamamoto S."/>
            <person name="Adams D.R."/>
            <person name="Markello T.C."/>
            <person name="Gahl W.A."/>
            <person name="Bellen H.J."/>
            <person name="Wangler M.F."/>
            <person name="Malicdan M.C."/>
        </authorList>
    </citation>
    <scope>VARIANTS HADDS GLN-163 AND LEU-163</scope>
    <scope>CHARACTERIZATION OF VARIANTS HADDS GLN-163 AND LEU-163</scope>
    <scope>FUNCTION</scope>
</reference>
<reference key="8">
    <citation type="journal article" date="2017" name="Am. J. Hum. Genet.">
        <title>De novo mutations in EBF3 cause a neurodevelopmental syndrome.</title>
        <authorList>
            <person name="Sleven H."/>
            <person name="Welsh S.J."/>
            <person name="Yu J."/>
            <person name="Churchill M.E."/>
            <person name="Wright C.F."/>
            <person name="Henderson A."/>
            <person name="Horvath R."/>
            <person name="Rankin J."/>
            <person name="Vogt J."/>
            <person name="Magee A."/>
            <person name="McConnell V."/>
            <person name="Green A."/>
            <person name="King M.D."/>
            <person name="Cox H."/>
            <person name="Armstrong L."/>
            <person name="Lehman A."/>
            <person name="Nelson T.N."/>
            <person name="Williams J."/>
            <person name="Clouston P."/>
            <person name="Hagman J."/>
            <person name="Nemeth A.H."/>
        </authorList>
    </citation>
    <scope>VARIANTS HADDS PRO-163; LEU-177 AND ASN-193</scope>
    <scope>CHARACTERIZATION OF VARIANTS HADDS PRO-163; LEU-177 AND ASN-193</scope>
    <scope>FUNCTION</scope>
</reference>
<gene>
    <name type="primary">EBF3</name>
    <name type="synonym">COE3</name>
</gene>